<proteinExistence type="evidence at protein level"/>
<feature type="peptide" id="PRO_0000421519" description="Extended FMRFamide-5" evidence="3">
    <location>
        <begin position="1"/>
        <end position="8"/>
    </location>
</feature>
<feature type="modified residue" description="Leucine amide" evidence="3">
    <location>
        <position position="8"/>
    </location>
</feature>
<feature type="unsure residue" description="L or I" evidence="3">
    <location>
        <position position="6"/>
    </location>
</feature>
<feature type="unsure residue" description="L or I" evidence="3">
    <location>
        <position position="8"/>
    </location>
</feature>
<organism>
    <name type="scientific">Tyrannophasma gladiator</name>
    <name type="common">Gladiator</name>
    <name type="synonym">Heel-walker</name>
    <dbReference type="NCBI Taxonomy" id="270861"/>
    <lineage>
        <taxon>Eukaryota</taxon>
        <taxon>Metazoa</taxon>
        <taxon>Ecdysozoa</taxon>
        <taxon>Arthropoda</taxon>
        <taxon>Hexapoda</taxon>
        <taxon>Insecta</taxon>
        <taxon>Pterygota</taxon>
        <taxon>Neoptera</taxon>
        <taxon>Polyneoptera</taxon>
        <taxon>Mantophasmatodea</taxon>
        <taxon>Mantophasmatodea incertae sedis</taxon>
        <taxon>Tyrannophasma</taxon>
    </lineage>
</organism>
<reference evidence="5" key="1">
    <citation type="journal article" date="2012" name="Syst. Biol.">
        <title>Peptidomics-based phylogeny and biogeography of Mantophasmatodea (Hexapoda).</title>
        <authorList>
            <person name="Predel R."/>
            <person name="Neupert S."/>
            <person name="Huetteroth W."/>
            <person name="Kahnt J."/>
            <person name="Waidelich D."/>
            <person name="Roth S."/>
        </authorList>
    </citation>
    <scope>PROTEIN SEQUENCE</scope>
    <scope>AMIDATION AT LEU-8</scope>
    <source>
        <tissue evidence="3">Thoracic perisympathetic organs</tissue>
    </source>
</reference>
<dbReference type="GO" id="GO:0005576">
    <property type="term" value="C:extracellular region"/>
    <property type="evidence" value="ECO:0007669"/>
    <property type="project" value="UniProtKB-SubCell"/>
</dbReference>
<dbReference type="GO" id="GO:0007218">
    <property type="term" value="P:neuropeptide signaling pathway"/>
    <property type="evidence" value="ECO:0007669"/>
    <property type="project" value="UniProtKB-KW"/>
</dbReference>
<keyword id="KW-0027">Amidation</keyword>
<keyword id="KW-0903">Direct protein sequencing</keyword>
<keyword id="KW-0527">Neuropeptide</keyword>
<keyword id="KW-0964">Secreted</keyword>
<protein>
    <recommendedName>
        <fullName evidence="4">Extended FMRFamide-5</fullName>
        <shortName evidence="4">FMRFa-5</shortName>
    </recommendedName>
</protein>
<comment type="function">
    <text evidence="1">FMRFamides and FMRFamide-like peptides are neuropeptides.</text>
</comment>
<comment type="subcellular location">
    <subcellularLocation>
        <location evidence="6">Secreted</location>
    </subcellularLocation>
</comment>
<comment type="similarity">
    <text evidence="2">Belongs to the FARP (FMRF amide related peptide) family.</text>
</comment>
<evidence type="ECO:0000250" key="1">
    <source>
        <dbReference type="UniProtKB" id="P34405"/>
    </source>
</evidence>
<evidence type="ECO:0000255" key="2"/>
<evidence type="ECO:0000269" key="3">
    <source>
    </source>
</evidence>
<evidence type="ECO:0000303" key="4">
    <source>
    </source>
</evidence>
<evidence type="ECO:0000305" key="5"/>
<evidence type="ECO:0000305" key="6">
    <source>
    </source>
</evidence>
<sequence>TDRNFLRL</sequence>
<accession>B3A0I0</accession>
<name>FAR5_TYRGL</name>